<feature type="chain" id="PRO_1000068511" description="Cation-efflux pump FieF">
    <location>
        <begin position="1"/>
        <end position="300"/>
    </location>
</feature>
<feature type="transmembrane region" description="Helical" evidence="1">
    <location>
        <begin position="12"/>
        <end position="32"/>
    </location>
</feature>
<feature type="transmembrane region" description="Helical" evidence="1">
    <location>
        <begin position="39"/>
        <end position="59"/>
    </location>
</feature>
<feature type="transmembrane region" description="Helical" evidence="1">
    <location>
        <begin position="82"/>
        <end position="102"/>
    </location>
</feature>
<feature type="transmembrane region" description="Helical" evidence="1">
    <location>
        <begin position="114"/>
        <end position="134"/>
    </location>
</feature>
<feature type="transmembrane region" description="Helical" evidence="1">
    <location>
        <begin position="156"/>
        <end position="176"/>
    </location>
</feature>
<feature type="transmembrane region" description="Helical" evidence="1">
    <location>
        <begin position="178"/>
        <end position="198"/>
    </location>
</feature>
<feature type="binding site" evidence="1">
    <location>
        <position position="45"/>
    </location>
    <ligand>
        <name>Zn(2+)</name>
        <dbReference type="ChEBI" id="CHEBI:29105"/>
    </ligand>
</feature>
<feature type="binding site" evidence="1">
    <location>
        <position position="49"/>
    </location>
    <ligand>
        <name>Zn(2+)</name>
        <dbReference type="ChEBI" id="CHEBI:29105"/>
    </ligand>
</feature>
<feature type="binding site" evidence="1">
    <location>
        <position position="153"/>
    </location>
    <ligand>
        <name>Zn(2+)</name>
        <dbReference type="ChEBI" id="CHEBI:29105"/>
    </ligand>
</feature>
<feature type="binding site" evidence="1">
    <location>
        <position position="157"/>
    </location>
    <ligand>
        <name>Zn(2+)</name>
        <dbReference type="ChEBI" id="CHEBI:29105"/>
    </ligand>
</feature>
<gene>
    <name evidence="1" type="primary">fieF</name>
    <name type="ordered locus">EcE24377A_4448</name>
</gene>
<dbReference type="EMBL" id="CP000800">
    <property type="protein sequence ID" value="ABV20425.1"/>
    <property type="molecule type" value="Genomic_DNA"/>
</dbReference>
<dbReference type="RefSeq" id="WP_001076742.1">
    <property type="nucleotide sequence ID" value="NC_009801.1"/>
</dbReference>
<dbReference type="SMR" id="A7ZUC8"/>
<dbReference type="GeneID" id="75204588"/>
<dbReference type="KEGG" id="ecw:EcE24377A_4448"/>
<dbReference type="HOGENOM" id="CLU_013430_3_0_6"/>
<dbReference type="Proteomes" id="UP000001122">
    <property type="component" value="Chromosome"/>
</dbReference>
<dbReference type="GO" id="GO:0005886">
    <property type="term" value="C:plasma membrane"/>
    <property type="evidence" value="ECO:0007669"/>
    <property type="project" value="UniProtKB-SubCell"/>
</dbReference>
<dbReference type="GO" id="GO:0015086">
    <property type="term" value="F:cadmium ion transmembrane transporter activity"/>
    <property type="evidence" value="ECO:0007669"/>
    <property type="project" value="UniProtKB-UniRule"/>
</dbReference>
<dbReference type="GO" id="GO:0015093">
    <property type="term" value="F:ferrous iron transmembrane transporter activity"/>
    <property type="evidence" value="ECO:0007669"/>
    <property type="project" value="TreeGrafter"/>
</dbReference>
<dbReference type="GO" id="GO:0046872">
    <property type="term" value="F:metal ion binding"/>
    <property type="evidence" value="ECO:0007669"/>
    <property type="project" value="UniProtKB-KW"/>
</dbReference>
<dbReference type="GO" id="GO:0015341">
    <property type="term" value="F:zinc efflux antiporter activity"/>
    <property type="evidence" value="ECO:0007669"/>
    <property type="project" value="TreeGrafter"/>
</dbReference>
<dbReference type="GO" id="GO:0006882">
    <property type="term" value="P:intracellular zinc ion homeostasis"/>
    <property type="evidence" value="ECO:0007669"/>
    <property type="project" value="TreeGrafter"/>
</dbReference>
<dbReference type="FunFam" id="1.20.1510.10:FF:000001">
    <property type="entry name" value="Ferrous-iron efflux pump FieF"/>
    <property type="match status" value="1"/>
</dbReference>
<dbReference type="FunFam" id="3.30.70.1350:FF:000002">
    <property type="entry name" value="Ferrous-iron efflux pump FieF"/>
    <property type="match status" value="1"/>
</dbReference>
<dbReference type="Gene3D" id="1.20.1510.10">
    <property type="entry name" value="Cation efflux protein transmembrane domain"/>
    <property type="match status" value="1"/>
</dbReference>
<dbReference type="Gene3D" id="3.30.70.1350">
    <property type="entry name" value="Cation efflux protein, cytoplasmic domain"/>
    <property type="match status" value="1"/>
</dbReference>
<dbReference type="HAMAP" id="MF_01425">
    <property type="entry name" value="Cation_efflux_FieF"/>
    <property type="match status" value="1"/>
</dbReference>
<dbReference type="InterPro" id="IPR002524">
    <property type="entry name" value="Cation_efflux"/>
</dbReference>
<dbReference type="InterPro" id="IPR027470">
    <property type="entry name" value="Cation_efflux_CTD"/>
</dbReference>
<dbReference type="InterPro" id="IPR036837">
    <property type="entry name" value="Cation_efflux_CTD_sf"/>
</dbReference>
<dbReference type="InterPro" id="IPR023783">
    <property type="entry name" value="Cation_efflux_FieF"/>
</dbReference>
<dbReference type="InterPro" id="IPR027469">
    <property type="entry name" value="Cation_efflux_TMD_sf"/>
</dbReference>
<dbReference type="InterPro" id="IPR050291">
    <property type="entry name" value="CDF_Transporter"/>
</dbReference>
<dbReference type="NCBIfam" id="TIGR01297">
    <property type="entry name" value="CDF"/>
    <property type="match status" value="1"/>
</dbReference>
<dbReference type="NCBIfam" id="NF007064">
    <property type="entry name" value="PRK09509.1"/>
    <property type="match status" value="1"/>
</dbReference>
<dbReference type="PANTHER" id="PTHR43840:SF41">
    <property type="entry name" value="CATION-EFFLUX PUMP FIEF"/>
    <property type="match status" value="1"/>
</dbReference>
<dbReference type="PANTHER" id="PTHR43840">
    <property type="entry name" value="MITOCHONDRIAL METAL TRANSPORTER 1-RELATED"/>
    <property type="match status" value="1"/>
</dbReference>
<dbReference type="Pfam" id="PF01545">
    <property type="entry name" value="Cation_efflux"/>
    <property type="match status" value="1"/>
</dbReference>
<dbReference type="Pfam" id="PF16916">
    <property type="entry name" value="ZT_dimer"/>
    <property type="match status" value="1"/>
</dbReference>
<dbReference type="SUPFAM" id="SSF160240">
    <property type="entry name" value="Cation efflux protein cytoplasmic domain-like"/>
    <property type="match status" value="1"/>
</dbReference>
<dbReference type="SUPFAM" id="SSF161111">
    <property type="entry name" value="Cation efflux protein transmembrane domain-like"/>
    <property type="match status" value="1"/>
</dbReference>
<keyword id="KW-0997">Cell inner membrane</keyword>
<keyword id="KW-1003">Cell membrane</keyword>
<keyword id="KW-0406">Ion transport</keyword>
<keyword id="KW-0408">Iron</keyword>
<keyword id="KW-0410">Iron transport</keyword>
<keyword id="KW-0472">Membrane</keyword>
<keyword id="KW-0479">Metal-binding</keyword>
<keyword id="KW-1185">Reference proteome</keyword>
<keyword id="KW-0812">Transmembrane</keyword>
<keyword id="KW-1133">Transmembrane helix</keyword>
<keyword id="KW-0813">Transport</keyword>
<keyword id="KW-0862">Zinc</keyword>
<keyword id="KW-0864">Zinc transport</keyword>
<evidence type="ECO:0000255" key="1">
    <source>
        <dbReference type="HAMAP-Rule" id="MF_01425"/>
    </source>
</evidence>
<reference key="1">
    <citation type="journal article" date="2008" name="J. Bacteriol.">
        <title>The pangenome structure of Escherichia coli: comparative genomic analysis of E. coli commensal and pathogenic isolates.</title>
        <authorList>
            <person name="Rasko D.A."/>
            <person name="Rosovitz M.J."/>
            <person name="Myers G.S.A."/>
            <person name="Mongodin E.F."/>
            <person name="Fricke W.F."/>
            <person name="Gajer P."/>
            <person name="Crabtree J."/>
            <person name="Sebaihia M."/>
            <person name="Thomson N.R."/>
            <person name="Chaudhuri R."/>
            <person name="Henderson I.R."/>
            <person name="Sperandio V."/>
            <person name="Ravel J."/>
        </authorList>
    </citation>
    <scope>NUCLEOTIDE SEQUENCE [LARGE SCALE GENOMIC DNA]</scope>
    <source>
        <strain>E24377A / ETEC</strain>
    </source>
</reference>
<protein>
    <recommendedName>
        <fullName evidence="1">Cation-efflux pump FieF</fullName>
    </recommendedName>
</protein>
<comment type="function">
    <text evidence="1">Divalent metal cation transporter which exports Zn(2+), Cd(2+) and possibly Fe(2+). May be involved in zinc and iron detoxification by efflux.</text>
</comment>
<comment type="catalytic activity">
    <reaction evidence="1">
        <text>Zn(2+)(in) + H(+)(out) = Zn(2+)(out) + H(+)(in)</text>
        <dbReference type="Rhea" id="RHEA:28839"/>
        <dbReference type="ChEBI" id="CHEBI:15378"/>
        <dbReference type="ChEBI" id="CHEBI:29105"/>
    </reaction>
</comment>
<comment type="catalytic activity">
    <reaction evidence="1">
        <text>Cd(2+)(in) + H(+)(out) = Cd(2+)(out) + H(+)(in)</text>
        <dbReference type="Rhea" id="RHEA:28739"/>
        <dbReference type="ChEBI" id="CHEBI:15378"/>
        <dbReference type="ChEBI" id="CHEBI:48775"/>
    </reaction>
</comment>
<comment type="catalytic activity">
    <reaction evidence="1">
        <text>Fe(2+)(in) + H(+)(out) = Fe(2+)(out) + H(+)(in)</text>
        <dbReference type="Rhea" id="RHEA:29439"/>
        <dbReference type="ChEBI" id="CHEBI:15378"/>
        <dbReference type="ChEBI" id="CHEBI:29033"/>
    </reaction>
</comment>
<comment type="subunit">
    <text evidence="1">Homodimer.</text>
</comment>
<comment type="subcellular location">
    <subcellularLocation>
        <location evidence="1">Cell inner membrane</location>
        <topology evidence="1">Multi-pass membrane protein</topology>
    </subcellularLocation>
</comment>
<comment type="similarity">
    <text evidence="1">Belongs to the cation diffusion facilitator (CDF) transporter (TC 2.A.4) family. FieF subfamily.</text>
</comment>
<proteinExistence type="inferred from homology"/>
<accession>A7ZUC8</accession>
<name>FIEF_ECO24</name>
<organism>
    <name type="scientific">Escherichia coli O139:H28 (strain E24377A / ETEC)</name>
    <dbReference type="NCBI Taxonomy" id="331111"/>
    <lineage>
        <taxon>Bacteria</taxon>
        <taxon>Pseudomonadati</taxon>
        <taxon>Pseudomonadota</taxon>
        <taxon>Gammaproteobacteria</taxon>
        <taxon>Enterobacterales</taxon>
        <taxon>Enterobacteriaceae</taxon>
        <taxon>Escherichia</taxon>
    </lineage>
</organism>
<sequence>MNQSYGRLVSRAAIAATAMASLLLLIKIFAWWYTGSVSILAALVDSLVDIGASLTNLLVVRYSLQPADDNHSFGHGKAESLAALAQSMFISGSALFLFLTGIQHLISPTPMTDPGVGVIVTIVALICTIILVSFQRWVVRRTQSQAVRADMLHYQSDVMMNGAILLALGLSWYGWHRADALFALGIGIYILYSALRMGYEAVQSLLDRALPDEERQEIIDIVTSWPGVSGAHDLRTRQSGPTRFIQIHLEMEDSLPLVQAHMVADQVEQAILRRFPGSDVIIHQDPCSVVPREGKRSMLS</sequence>